<dbReference type="EC" id="3.1.3.11" evidence="1"/>
<dbReference type="EMBL" id="AE009951">
    <property type="protein sequence ID" value="AAL94994.1"/>
    <property type="molecule type" value="Genomic_DNA"/>
</dbReference>
<dbReference type="RefSeq" id="NP_603695.1">
    <property type="nucleotide sequence ID" value="NC_003454.1"/>
</dbReference>
<dbReference type="RefSeq" id="WP_011016655.1">
    <property type="nucleotide sequence ID" value="NZ_OZ209243.1"/>
</dbReference>
<dbReference type="FunCoup" id="Q8RFB5">
    <property type="interactions" value="37"/>
</dbReference>
<dbReference type="STRING" id="190304.FN0798"/>
<dbReference type="PaxDb" id="190304-FN0798"/>
<dbReference type="EnsemblBacteria" id="AAL94994">
    <property type="protein sequence ID" value="AAL94994"/>
    <property type="gene ID" value="FN0798"/>
</dbReference>
<dbReference type="KEGG" id="fnu:FN0798"/>
<dbReference type="PATRIC" id="fig|190304.8.peg.1360"/>
<dbReference type="eggNOG" id="COG3855">
    <property type="taxonomic scope" value="Bacteria"/>
</dbReference>
<dbReference type="HOGENOM" id="CLU_028392_2_0_0"/>
<dbReference type="InParanoid" id="Q8RFB5"/>
<dbReference type="BioCyc" id="FNUC190304:G1FZS-1383-MONOMER"/>
<dbReference type="UniPathway" id="UPA00138"/>
<dbReference type="Proteomes" id="UP000002521">
    <property type="component" value="Chromosome"/>
</dbReference>
<dbReference type="GO" id="GO:0042132">
    <property type="term" value="F:fructose 1,6-bisphosphate 1-phosphatase activity"/>
    <property type="evidence" value="ECO:0007669"/>
    <property type="project" value="UniProtKB-UniRule"/>
</dbReference>
<dbReference type="GO" id="GO:0006094">
    <property type="term" value="P:gluconeogenesis"/>
    <property type="evidence" value="ECO:0007669"/>
    <property type="project" value="UniProtKB-UniRule"/>
</dbReference>
<dbReference type="CDD" id="cd00838">
    <property type="entry name" value="MPP_superfamily"/>
    <property type="match status" value="1"/>
</dbReference>
<dbReference type="Gene3D" id="3.60.21.10">
    <property type="match status" value="1"/>
</dbReference>
<dbReference type="HAMAP" id="MF_01854">
    <property type="entry name" value="FBPase_class3"/>
    <property type="match status" value="1"/>
</dbReference>
<dbReference type="InterPro" id="IPR009164">
    <property type="entry name" value="FBPtase_class3"/>
</dbReference>
<dbReference type="InterPro" id="IPR029052">
    <property type="entry name" value="Metallo-depent_PP-like"/>
</dbReference>
<dbReference type="Pfam" id="PF06874">
    <property type="entry name" value="FBPase_2"/>
    <property type="match status" value="1"/>
</dbReference>
<dbReference type="PIRSF" id="PIRSF000906">
    <property type="entry name" value="FBPtase_Bacill"/>
    <property type="match status" value="1"/>
</dbReference>
<dbReference type="SUPFAM" id="SSF56300">
    <property type="entry name" value="Metallo-dependent phosphatases"/>
    <property type="match status" value="2"/>
</dbReference>
<keyword id="KW-0119">Carbohydrate metabolism</keyword>
<keyword id="KW-0378">Hydrolase</keyword>
<keyword id="KW-0464">Manganese</keyword>
<keyword id="KW-1185">Reference proteome</keyword>
<name>F16PC_FUSNN</name>
<protein>
    <recommendedName>
        <fullName evidence="1">Fructose-1,6-bisphosphatase class 3</fullName>
        <shortName evidence="1">FBPase class 3</shortName>
        <ecNumber evidence="1">3.1.3.11</ecNumber>
    </recommendedName>
    <alternativeName>
        <fullName evidence="1">D-fructose-1,6-bisphosphate 1-phosphohydrolase class 3</fullName>
    </alternativeName>
</protein>
<organism>
    <name type="scientific">Fusobacterium nucleatum subsp. nucleatum (strain ATCC 25586 / DSM 15643 / BCRC 10681 / CIP 101130 / JCM 8532 / KCTC 2640 / LMG 13131 / VPI 4355)</name>
    <dbReference type="NCBI Taxonomy" id="190304"/>
    <lineage>
        <taxon>Bacteria</taxon>
        <taxon>Fusobacteriati</taxon>
        <taxon>Fusobacteriota</taxon>
        <taxon>Fusobacteriia</taxon>
        <taxon>Fusobacteriales</taxon>
        <taxon>Fusobacteriaceae</taxon>
        <taxon>Fusobacterium</taxon>
    </lineage>
</organism>
<proteinExistence type="inferred from homology"/>
<reference key="1">
    <citation type="journal article" date="2002" name="J. Bacteriol.">
        <title>Genome sequence and analysis of the oral bacterium Fusobacterium nucleatum strain ATCC 25586.</title>
        <authorList>
            <person name="Kapatral V."/>
            <person name="Anderson I."/>
            <person name="Ivanova N."/>
            <person name="Reznik G."/>
            <person name="Los T."/>
            <person name="Lykidis A."/>
            <person name="Bhattacharyya A."/>
            <person name="Bartman A."/>
            <person name="Gardner W."/>
            <person name="Grechkin G."/>
            <person name="Zhu L."/>
            <person name="Vasieva O."/>
            <person name="Chu L."/>
            <person name="Kogan Y."/>
            <person name="Chaga O."/>
            <person name="Goltsman E."/>
            <person name="Bernal A."/>
            <person name="Larsen N."/>
            <person name="D'Souza M."/>
            <person name="Walunas T."/>
            <person name="Pusch G."/>
            <person name="Haselkorn R."/>
            <person name="Fonstein M."/>
            <person name="Kyrpides N.C."/>
            <person name="Overbeek R."/>
        </authorList>
    </citation>
    <scope>NUCLEOTIDE SEQUENCE [LARGE SCALE GENOMIC DNA]</scope>
    <source>
        <strain>ATCC 25586 / DSM 15643 / BCRC 10681 / CIP 101130 / JCM 8532 / KCTC 2640 / LMG 13131 / VPI 4355</strain>
    </source>
</reference>
<comment type="catalytic activity">
    <reaction evidence="1">
        <text>beta-D-fructose 1,6-bisphosphate + H2O = beta-D-fructose 6-phosphate + phosphate</text>
        <dbReference type="Rhea" id="RHEA:11064"/>
        <dbReference type="ChEBI" id="CHEBI:15377"/>
        <dbReference type="ChEBI" id="CHEBI:32966"/>
        <dbReference type="ChEBI" id="CHEBI:43474"/>
        <dbReference type="ChEBI" id="CHEBI:57634"/>
        <dbReference type="EC" id="3.1.3.11"/>
    </reaction>
</comment>
<comment type="cofactor">
    <cofactor evidence="1">
        <name>Mn(2+)</name>
        <dbReference type="ChEBI" id="CHEBI:29035"/>
    </cofactor>
</comment>
<comment type="pathway">
    <text evidence="1">Carbohydrate biosynthesis; gluconeogenesis.</text>
</comment>
<comment type="similarity">
    <text evidence="1">Belongs to the FBPase class 3 family.</text>
</comment>
<accession>Q8RFB5</accession>
<sequence>MNTEIKYLELLSKTFKNIAETSTEIINLQAIMNLPKGTEHFMTDIHGEYEAFNHVLRNGSGTIRNKIEEAYGNKLTENEKKELASIIYYPKEKVELMQNKDNFNIDRWMITIIYRLIEVCKVVCSKYTRSKVRKAMTKDFEYILQELLYEKKELANKKEYFDSIVDTIISIDRGKEFIIAICNLIQRLNIDHLHIVGDIYDRGPFPHLIMDTLAEYSNLDIQWGNHDILWIGAALGNKACIANVIRICCRYNNNDILEEAYGINLLPFATFAMKYYGDDPCKRFRAKEGVDSDLIAQMHKAMSIIQFKVEGLYSERNPELEMSSRESLKHINYEKGTINLNGVEYPLNDTNFPTVNPENPLELLEEEAELLDKLQASFLGSEKLQKHMQLLFAKGGMYLKYNSNLLFHACIPMEPNGEFSELFVEDGYYKGKALMDKIDNIVRQAYYDRKNVEVNKKHRDFIWYLWAGRLSPLFGKDVMKTFERYFIDDKTTHKEIKNPYHKLINDEKVCDKIFEEFGLNPRTSHIINGHIPVKVKEGESPVKANGKLLIIDGGFSRAYQSTTGIAGYTLTYNSYGMKLASHLKFISKEAAIKDGTDMISSHIIVETKSKRMKVKDTDIGKSIQTQINDLKKLLKAYRIGLIKSN</sequence>
<gene>
    <name evidence="1" type="primary">fbp</name>
    <name type="ordered locus">FN0798</name>
</gene>
<evidence type="ECO:0000255" key="1">
    <source>
        <dbReference type="HAMAP-Rule" id="MF_01854"/>
    </source>
</evidence>
<feature type="chain" id="PRO_0000363093" description="Fructose-1,6-bisphosphatase class 3">
    <location>
        <begin position="1"/>
        <end position="645"/>
    </location>
</feature>